<sequence>MLVTRDPITADGALLLKTYHCVEDRLSGAGLRLVAEVAANKVVVSFPLRVMNGRAAVFTRPHNDALSRLADERGWAVRRARLSTEEFVDVDKERGGTEH</sequence>
<organism>
    <name type="scientific">Micromonospora olivasterospora</name>
    <dbReference type="NCBI Taxonomy" id="1880"/>
    <lineage>
        <taxon>Bacteria</taxon>
        <taxon>Bacillati</taxon>
        <taxon>Actinomycetota</taxon>
        <taxon>Actinomycetes</taxon>
        <taxon>Micromonosporales</taxon>
        <taxon>Micromonosporaceae</taxon>
        <taxon>Micromonospora</taxon>
    </lineage>
</organism>
<feature type="chain" id="PRO_0000066214" description="Uncharacterized 10.9 kDa protein in fmrO 5'region">
    <location>
        <begin position="1"/>
        <end position="99"/>
    </location>
</feature>
<dbReference type="EMBL" id="D13171">
    <property type="protein sequence ID" value="BAA02450.1"/>
    <property type="molecule type" value="Genomic_DNA"/>
</dbReference>
<dbReference type="PIR" id="JN0650">
    <property type="entry name" value="JN0650"/>
</dbReference>
<dbReference type="SMR" id="Q08328"/>
<dbReference type="Gene3D" id="3.40.50.150">
    <property type="entry name" value="Vaccinia Virus protein VP39"/>
    <property type="match status" value="1"/>
</dbReference>
<dbReference type="InterPro" id="IPR025981">
    <property type="entry name" value="rRNA_MeTrfase"/>
</dbReference>
<dbReference type="InterPro" id="IPR029063">
    <property type="entry name" value="SAM-dependent_MTases_sf"/>
</dbReference>
<dbReference type="Pfam" id="PF07091">
    <property type="entry name" value="FmrO"/>
    <property type="match status" value="1"/>
</dbReference>
<protein>
    <recommendedName>
        <fullName>Uncharacterized 10.9 kDa protein in fmrO 5'region</fullName>
    </recommendedName>
    <alternativeName>
        <fullName>ORF-2</fullName>
    </alternativeName>
</protein>
<accession>Q08328</accession>
<proteinExistence type="predicted"/>
<name>YFM2_MICOL</name>
<reference key="1">
    <citation type="journal article" date="1993" name="Gene">
        <title>Analysis of the self-defense gene (fmrO) of a fortimicin A (astromicin) producer, Micromonospora olivasterospora: comparison with other aminoglycoside-resistance-encoding genes.</title>
        <authorList>
            <person name="Ohta T."/>
            <person name="Hasegawa M."/>
        </authorList>
    </citation>
    <scope>NUCLEOTIDE SEQUENCE [GENOMIC DNA]</scope>
</reference>